<dbReference type="EC" id="2.4.2.9" evidence="1"/>
<dbReference type="EMBL" id="AE005674">
    <property type="protein sequence ID" value="AAN44043.2"/>
    <property type="molecule type" value="Genomic_DNA"/>
</dbReference>
<dbReference type="EMBL" id="AE014073">
    <property type="protein sequence ID" value="AAP17853.1"/>
    <property type="molecule type" value="Genomic_DNA"/>
</dbReference>
<dbReference type="RefSeq" id="NP_708336.2">
    <property type="nucleotide sequence ID" value="NC_004337.2"/>
</dbReference>
<dbReference type="RefSeq" id="WP_001295473.1">
    <property type="nucleotide sequence ID" value="NZ_WPGW01000011.1"/>
</dbReference>
<dbReference type="SMR" id="P0A8F3"/>
<dbReference type="STRING" id="198214.SF2542"/>
<dbReference type="PaxDb" id="198214-SF2542"/>
<dbReference type="GeneID" id="1026868"/>
<dbReference type="GeneID" id="93774638"/>
<dbReference type="KEGG" id="sfl:SF2542"/>
<dbReference type="KEGG" id="sfx:S2691"/>
<dbReference type="PATRIC" id="fig|198214.7.peg.3038"/>
<dbReference type="HOGENOM" id="CLU_067096_2_2_6"/>
<dbReference type="UniPathway" id="UPA00574">
    <property type="reaction ID" value="UER00636"/>
</dbReference>
<dbReference type="Proteomes" id="UP000001006">
    <property type="component" value="Chromosome"/>
</dbReference>
<dbReference type="Proteomes" id="UP000002673">
    <property type="component" value="Chromosome"/>
</dbReference>
<dbReference type="GO" id="GO:0005525">
    <property type="term" value="F:GTP binding"/>
    <property type="evidence" value="ECO:0007669"/>
    <property type="project" value="UniProtKB-KW"/>
</dbReference>
<dbReference type="GO" id="GO:0000287">
    <property type="term" value="F:magnesium ion binding"/>
    <property type="evidence" value="ECO:0007669"/>
    <property type="project" value="UniProtKB-UniRule"/>
</dbReference>
<dbReference type="GO" id="GO:0004845">
    <property type="term" value="F:uracil phosphoribosyltransferase activity"/>
    <property type="evidence" value="ECO:0007669"/>
    <property type="project" value="UniProtKB-UniRule"/>
</dbReference>
<dbReference type="GO" id="GO:0044206">
    <property type="term" value="P:UMP salvage"/>
    <property type="evidence" value="ECO:0007669"/>
    <property type="project" value="UniProtKB-UniRule"/>
</dbReference>
<dbReference type="GO" id="GO:0006223">
    <property type="term" value="P:uracil salvage"/>
    <property type="evidence" value="ECO:0007669"/>
    <property type="project" value="InterPro"/>
</dbReference>
<dbReference type="CDD" id="cd06223">
    <property type="entry name" value="PRTases_typeI"/>
    <property type="match status" value="1"/>
</dbReference>
<dbReference type="FunFam" id="3.40.50.2020:FF:000003">
    <property type="entry name" value="Uracil phosphoribosyltransferase"/>
    <property type="match status" value="1"/>
</dbReference>
<dbReference type="Gene3D" id="3.40.50.2020">
    <property type="match status" value="1"/>
</dbReference>
<dbReference type="HAMAP" id="MF_01218_B">
    <property type="entry name" value="Upp_B"/>
    <property type="match status" value="1"/>
</dbReference>
<dbReference type="InterPro" id="IPR000836">
    <property type="entry name" value="PRibTrfase_dom"/>
</dbReference>
<dbReference type="InterPro" id="IPR029057">
    <property type="entry name" value="PRTase-like"/>
</dbReference>
<dbReference type="InterPro" id="IPR034332">
    <property type="entry name" value="Upp_B"/>
</dbReference>
<dbReference type="InterPro" id="IPR050054">
    <property type="entry name" value="UPRTase/APRTase"/>
</dbReference>
<dbReference type="InterPro" id="IPR005765">
    <property type="entry name" value="Ura_phspho_trans"/>
</dbReference>
<dbReference type="NCBIfam" id="NF001097">
    <property type="entry name" value="PRK00129.1"/>
    <property type="match status" value="1"/>
</dbReference>
<dbReference type="NCBIfam" id="TIGR01091">
    <property type="entry name" value="upp"/>
    <property type="match status" value="1"/>
</dbReference>
<dbReference type="PANTHER" id="PTHR32315">
    <property type="entry name" value="ADENINE PHOSPHORIBOSYLTRANSFERASE"/>
    <property type="match status" value="1"/>
</dbReference>
<dbReference type="PANTHER" id="PTHR32315:SF4">
    <property type="entry name" value="URACIL PHOSPHORIBOSYLTRANSFERASE, CHLOROPLASTIC"/>
    <property type="match status" value="1"/>
</dbReference>
<dbReference type="Pfam" id="PF14681">
    <property type="entry name" value="UPRTase"/>
    <property type="match status" value="1"/>
</dbReference>
<dbReference type="SUPFAM" id="SSF53271">
    <property type="entry name" value="PRTase-like"/>
    <property type="match status" value="1"/>
</dbReference>
<sequence>MKIVEVKHPLVKHKLGLMREQDISTKRFRELASEVGSLLTYEATADLETEKVTIEGWNGPVEIDQIKGKKITVVPILRAGLGMMDGVLENVPSARISVVGMYRNEETLEPVPYFQKLVSNIDERMALIVDPMLATGGSVIATIDLLKKAGCSSIKVLVLVAAPEGIAALEKAHPDVELYTASIDQGLNEHGYIIPGLGDAGDKIFGTK</sequence>
<name>UPP_SHIFL</name>
<keyword id="KW-0021">Allosteric enzyme</keyword>
<keyword id="KW-0328">Glycosyltransferase</keyword>
<keyword id="KW-0342">GTP-binding</keyword>
<keyword id="KW-0460">Magnesium</keyword>
<keyword id="KW-0547">Nucleotide-binding</keyword>
<keyword id="KW-1185">Reference proteome</keyword>
<keyword id="KW-0808">Transferase</keyword>
<evidence type="ECO:0000255" key="1">
    <source>
        <dbReference type="HAMAP-Rule" id="MF_01218"/>
    </source>
</evidence>
<feature type="chain" id="PRO_0000120878" description="Uracil phosphoribosyltransferase">
    <location>
        <begin position="1"/>
        <end position="208"/>
    </location>
</feature>
<feature type="binding site" evidence="1">
    <location>
        <position position="78"/>
    </location>
    <ligand>
        <name>5-phospho-alpha-D-ribose 1-diphosphate</name>
        <dbReference type="ChEBI" id="CHEBI:58017"/>
    </ligand>
</feature>
<feature type="binding site" evidence="1">
    <location>
        <position position="103"/>
    </location>
    <ligand>
        <name>5-phospho-alpha-D-ribose 1-diphosphate</name>
        <dbReference type="ChEBI" id="CHEBI:58017"/>
    </ligand>
</feature>
<feature type="binding site" evidence="1">
    <location>
        <begin position="130"/>
        <end position="138"/>
    </location>
    <ligand>
        <name>5-phospho-alpha-D-ribose 1-diphosphate</name>
        <dbReference type="ChEBI" id="CHEBI:58017"/>
    </ligand>
</feature>
<feature type="binding site" evidence="1">
    <location>
        <position position="193"/>
    </location>
    <ligand>
        <name>uracil</name>
        <dbReference type="ChEBI" id="CHEBI:17568"/>
    </ligand>
</feature>
<feature type="binding site" evidence="1">
    <location>
        <begin position="198"/>
        <end position="200"/>
    </location>
    <ligand>
        <name>uracil</name>
        <dbReference type="ChEBI" id="CHEBI:17568"/>
    </ligand>
</feature>
<feature type="binding site" evidence="1">
    <location>
        <position position="199"/>
    </location>
    <ligand>
        <name>5-phospho-alpha-D-ribose 1-diphosphate</name>
        <dbReference type="ChEBI" id="CHEBI:58017"/>
    </ligand>
</feature>
<proteinExistence type="inferred from homology"/>
<reference key="1">
    <citation type="journal article" date="2002" name="Nucleic Acids Res.">
        <title>Genome sequence of Shigella flexneri 2a: insights into pathogenicity through comparison with genomes of Escherichia coli K12 and O157.</title>
        <authorList>
            <person name="Jin Q."/>
            <person name="Yuan Z."/>
            <person name="Xu J."/>
            <person name="Wang Y."/>
            <person name="Shen Y."/>
            <person name="Lu W."/>
            <person name="Wang J."/>
            <person name="Liu H."/>
            <person name="Yang J."/>
            <person name="Yang F."/>
            <person name="Zhang X."/>
            <person name="Zhang J."/>
            <person name="Yang G."/>
            <person name="Wu H."/>
            <person name="Qu D."/>
            <person name="Dong J."/>
            <person name="Sun L."/>
            <person name="Xue Y."/>
            <person name="Zhao A."/>
            <person name="Gao Y."/>
            <person name="Zhu J."/>
            <person name="Kan B."/>
            <person name="Ding K."/>
            <person name="Chen S."/>
            <person name="Cheng H."/>
            <person name="Yao Z."/>
            <person name="He B."/>
            <person name="Chen R."/>
            <person name="Ma D."/>
            <person name="Qiang B."/>
            <person name="Wen Y."/>
            <person name="Hou Y."/>
            <person name="Yu J."/>
        </authorList>
    </citation>
    <scope>NUCLEOTIDE SEQUENCE [LARGE SCALE GENOMIC DNA]</scope>
    <source>
        <strain>301 / Serotype 2a</strain>
    </source>
</reference>
<reference key="2">
    <citation type="journal article" date="2003" name="Infect. Immun.">
        <title>Complete genome sequence and comparative genomics of Shigella flexneri serotype 2a strain 2457T.</title>
        <authorList>
            <person name="Wei J."/>
            <person name="Goldberg M.B."/>
            <person name="Burland V."/>
            <person name="Venkatesan M.M."/>
            <person name="Deng W."/>
            <person name="Fournier G."/>
            <person name="Mayhew G.F."/>
            <person name="Plunkett G. III"/>
            <person name="Rose D.J."/>
            <person name="Darling A."/>
            <person name="Mau B."/>
            <person name="Perna N.T."/>
            <person name="Payne S.M."/>
            <person name="Runyen-Janecky L.J."/>
            <person name="Zhou S."/>
            <person name="Schwartz D.C."/>
            <person name="Blattner F.R."/>
        </authorList>
    </citation>
    <scope>NUCLEOTIDE SEQUENCE [LARGE SCALE GENOMIC DNA]</scope>
    <source>
        <strain>ATCC 700930 / 2457T / Serotype 2a</strain>
    </source>
</reference>
<organism>
    <name type="scientific">Shigella flexneri</name>
    <dbReference type="NCBI Taxonomy" id="623"/>
    <lineage>
        <taxon>Bacteria</taxon>
        <taxon>Pseudomonadati</taxon>
        <taxon>Pseudomonadota</taxon>
        <taxon>Gammaproteobacteria</taxon>
        <taxon>Enterobacterales</taxon>
        <taxon>Enterobacteriaceae</taxon>
        <taxon>Shigella</taxon>
    </lineage>
</organism>
<protein>
    <recommendedName>
        <fullName evidence="1">Uracil phosphoribosyltransferase</fullName>
        <ecNumber evidence="1">2.4.2.9</ecNumber>
    </recommendedName>
    <alternativeName>
        <fullName evidence="1">UMP pyrophosphorylase</fullName>
    </alternativeName>
    <alternativeName>
        <fullName evidence="1">UPRTase</fullName>
    </alternativeName>
</protein>
<gene>
    <name evidence="1" type="primary">upp</name>
    <name type="ordered locus">SF2542</name>
    <name type="ordered locus">S2691</name>
</gene>
<accession>P0A8F3</accession>
<accession>P25532</accession>
<accession>P78095</accession>
<accession>Q8XAC7</accession>
<comment type="function">
    <text evidence="1">Catalyzes the conversion of uracil and 5-phospho-alpha-D-ribose 1-diphosphate (PRPP) to UMP and diphosphate.</text>
</comment>
<comment type="catalytic activity">
    <reaction evidence="1">
        <text>UMP + diphosphate = 5-phospho-alpha-D-ribose 1-diphosphate + uracil</text>
        <dbReference type="Rhea" id="RHEA:13017"/>
        <dbReference type="ChEBI" id="CHEBI:17568"/>
        <dbReference type="ChEBI" id="CHEBI:33019"/>
        <dbReference type="ChEBI" id="CHEBI:57865"/>
        <dbReference type="ChEBI" id="CHEBI:58017"/>
        <dbReference type="EC" id="2.4.2.9"/>
    </reaction>
</comment>
<comment type="cofactor">
    <cofactor evidence="1">
        <name>Mg(2+)</name>
        <dbReference type="ChEBI" id="CHEBI:18420"/>
    </cofactor>
    <text evidence="1">Binds 1 Mg(2+) ion per subunit. The magnesium is bound as Mg-PRPP.</text>
</comment>
<comment type="activity regulation">
    <text evidence="1">Allosterically activated by GTP.</text>
</comment>
<comment type="pathway">
    <text evidence="1">Pyrimidine metabolism; UMP biosynthesis via salvage pathway; UMP from uracil: step 1/1.</text>
</comment>
<comment type="similarity">
    <text evidence="1">Belongs to the UPRTase family.</text>
</comment>